<keyword id="KW-1003">Cell membrane</keyword>
<keyword id="KW-0350">Heme biosynthesis</keyword>
<keyword id="KW-0472">Membrane</keyword>
<keyword id="KW-0808">Transferase</keyword>
<keyword id="KW-0812">Transmembrane</keyword>
<keyword id="KW-1133">Transmembrane helix</keyword>
<feature type="chain" id="PRO_1000199647" description="Protoheme IX farnesyltransferase">
    <location>
        <begin position="1"/>
        <end position="285"/>
    </location>
</feature>
<feature type="transmembrane region" description="Helical" evidence="1">
    <location>
        <begin position="8"/>
        <end position="28"/>
    </location>
</feature>
<feature type="transmembrane region" description="Helical" evidence="1">
    <location>
        <begin position="36"/>
        <end position="56"/>
    </location>
</feature>
<feature type="transmembrane region" description="Helical" evidence="1">
    <location>
        <begin position="80"/>
        <end position="100"/>
    </location>
</feature>
<feature type="transmembrane region" description="Helical" evidence="1">
    <location>
        <begin position="107"/>
        <end position="127"/>
    </location>
</feature>
<feature type="transmembrane region" description="Helical" evidence="1">
    <location>
        <begin position="133"/>
        <end position="153"/>
    </location>
</feature>
<feature type="transmembrane region" description="Helical" evidence="1">
    <location>
        <begin position="163"/>
        <end position="183"/>
    </location>
</feature>
<feature type="transmembrane region" description="Helical" evidence="1">
    <location>
        <begin position="209"/>
        <end position="229"/>
    </location>
</feature>
<feature type="transmembrane region" description="Helical" evidence="1">
    <location>
        <begin position="232"/>
        <end position="252"/>
    </location>
</feature>
<feature type="transmembrane region" description="Helical" evidence="1">
    <location>
        <begin position="265"/>
        <end position="285"/>
    </location>
</feature>
<evidence type="ECO:0000255" key="1">
    <source>
        <dbReference type="HAMAP-Rule" id="MF_00154"/>
    </source>
</evidence>
<name>CYOE_BUCAT</name>
<reference key="1">
    <citation type="journal article" date="2009" name="Science">
        <title>The dynamics and time scale of ongoing genomic erosion in symbiotic bacteria.</title>
        <authorList>
            <person name="Moran N.A."/>
            <person name="McLaughlin H.J."/>
            <person name="Sorek R."/>
        </authorList>
    </citation>
    <scope>NUCLEOTIDE SEQUENCE [LARGE SCALE GENOMIC DNA]</scope>
    <source>
        <strain>Tuc7</strain>
    </source>
</reference>
<organism>
    <name type="scientific">Buchnera aphidicola subsp. Acyrthosiphon pisum (strain Tuc7)</name>
    <dbReference type="NCBI Taxonomy" id="561501"/>
    <lineage>
        <taxon>Bacteria</taxon>
        <taxon>Pseudomonadati</taxon>
        <taxon>Pseudomonadota</taxon>
        <taxon>Gammaproteobacteria</taxon>
        <taxon>Enterobacterales</taxon>
        <taxon>Erwiniaceae</taxon>
        <taxon>Buchnera</taxon>
    </lineage>
</organism>
<comment type="function">
    <text evidence="1">Converts heme B (protoheme IX) to heme O by substitution of the vinyl group on carbon 2 of heme B porphyrin ring with a hydroxyethyl farnesyl side group.</text>
</comment>
<comment type="catalytic activity">
    <reaction evidence="1">
        <text>heme b + (2E,6E)-farnesyl diphosphate + H2O = Fe(II)-heme o + diphosphate</text>
        <dbReference type="Rhea" id="RHEA:28070"/>
        <dbReference type="ChEBI" id="CHEBI:15377"/>
        <dbReference type="ChEBI" id="CHEBI:33019"/>
        <dbReference type="ChEBI" id="CHEBI:60344"/>
        <dbReference type="ChEBI" id="CHEBI:60530"/>
        <dbReference type="ChEBI" id="CHEBI:175763"/>
        <dbReference type="EC" id="2.5.1.141"/>
    </reaction>
</comment>
<comment type="pathway">
    <text evidence="1">Porphyrin-containing compound metabolism; heme O biosynthesis; heme O from protoheme: step 1/1.</text>
</comment>
<comment type="subcellular location">
    <subcellularLocation>
        <location evidence="1">Cell membrane</location>
        <topology evidence="1">Multi-pass membrane protein</topology>
    </subcellularLocation>
</comment>
<comment type="miscellaneous">
    <text evidence="1">Carbon 2 of the heme B porphyrin ring is defined according to the Fischer nomenclature.</text>
</comment>
<comment type="similarity">
    <text evidence="1">Belongs to the UbiA prenyltransferase family. Protoheme IX farnesyltransferase subfamily.</text>
</comment>
<proteinExistence type="inferred from homology"/>
<sequence length="285" mass="32686">MFKNYIEITKPGIIIGNSTLITGGFLFASRHAAFNYVLFIYTILGASLVIASACVFNNLIDIDIDKKMKRTSNRVLSKKLLPVFSVFNFAIFLGVLGLSILGCLVNFISMSLAVFGFFIYVVLYTMFYKRRSFYSTFIGSFSGSTPSVIGYTAVSNTIDICSILLFVIVIFWQMSHFYSISIMRIKDYREAKIPVFSVVKGVAITKKHIFFYVLNFSFFSSLFTFLGYLSYNFLLLSSIVNFYWSFLSYSNIKKNNDKKNARKLFYFSIIVIVFFNFLISIDVFF</sequence>
<accession>B8D7Z7</accession>
<dbReference type="EC" id="2.5.1.141" evidence="1"/>
<dbReference type="EMBL" id="CP001158">
    <property type="protein sequence ID" value="ACL30262.1"/>
    <property type="molecule type" value="Genomic_DNA"/>
</dbReference>
<dbReference type="RefSeq" id="WP_009874420.1">
    <property type="nucleotide sequence ID" value="NC_011834.1"/>
</dbReference>
<dbReference type="SMR" id="B8D7Z7"/>
<dbReference type="KEGG" id="bau:BUAPTUC7_462"/>
<dbReference type="HOGENOM" id="CLU_029631_0_0_6"/>
<dbReference type="UniPathway" id="UPA00834">
    <property type="reaction ID" value="UER00712"/>
</dbReference>
<dbReference type="GO" id="GO:0005886">
    <property type="term" value="C:plasma membrane"/>
    <property type="evidence" value="ECO:0007669"/>
    <property type="project" value="UniProtKB-SubCell"/>
</dbReference>
<dbReference type="GO" id="GO:0008495">
    <property type="term" value="F:protoheme IX farnesyltransferase activity"/>
    <property type="evidence" value="ECO:0007669"/>
    <property type="project" value="UniProtKB-UniRule"/>
</dbReference>
<dbReference type="GO" id="GO:0048034">
    <property type="term" value="P:heme O biosynthetic process"/>
    <property type="evidence" value="ECO:0007669"/>
    <property type="project" value="UniProtKB-UniRule"/>
</dbReference>
<dbReference type="CDD" id="cd13957">
    <property type="entry name" value="PT_UbiA_Cox10"/>
    <property type="match status" value="1"/>
</dbReference>
<dbReference type="Gene3D" id="1.10.357.140">
    <property type="entry name" value="UbiA prenyltransferase"/>
    <property type="match status" value="1"/>
</dbReference>
<dbReference type="HAMAP" id="MF_00154">
    <property type="entry name" value="CyoE_CtaB"/>
    <property type="match status" value="1"/>
</dbReference>
<dbReference type="InterPro" id="IPR006369">
    <property type="entry name" value="Protohaem_IX_farnesylTrfase"/>
</dbReference>
<dbReference type="InterPro" id="IPR000537">
    <property type="entry name" value="UbiA_prenyltransferase"/>
</dbReference>
<dbReference type="InterPro" id="IPR030470">
    <property type="entry name" value="UbiA_prenylTrfase_CS"/>
</dbReference>
<dbReference type="InterPro" id="IPR044878">
    <property type="entry name" value="UbiA_sf"/>
</dbReference>
<dbReference type="NCBIfam" id="TIGR01473">
    <property type="entry name" value="cyoE_ctaB"/>
    <property type="match status" value="1"/>
</dbReference>
<dbReference type="NCBIfam" id="NF003348">
    <property type="entry name" value="PRK04375.1-1"/>
    <property type="match status" value="1"/>
</dbReference>
<dbReference type="PANTHER" id="PTHR43448">
    <property type="entry name" value="PROTOHEME IX FARNESYLTRANSFERASE, MITOCHONDRIAL"/>
    <property type="match status" value="1"/>
</dbReference>
<dbReference type="PANTHER" id="PTHR43448:SF2">
    <property type="entry name" value="PROTOHEME IX FARNESYLTRANSFERASE, MITOCHONDRIAL"/>
    <property type="match status" value="1"/>
</dbReference>
<dbReference type="Pfam" id="PF01040">
    <property type="entry name" value="UbiA"/>
    <property type="match status" value="1"/>
</dbReference>
<dbReference type="PROSITE" id="PS00943">
    <property type="entry name" value="UBIA"/>
    <property type="match status" value="1"/>
</dbReference>
<gene>
    <name evidence="1" type="primary">cyoE</name>
    <name type="ordered locus">BUAPTUC7_462</name>
</gene>
<protein>
    <recommendedName>
        <fullName evidence="1">Protoheme IX farnesyltransferase</fullName>
        <ecNumber evidence="1">2.5.1.141</ecNumber>
    </recommendedName>
    <alternativeName>
        <fullName evidence="1">Heme B farnesyltransferase</fullName>
    </alternativeName>
    <alternativeName>
        <fullName evidence="1">Heme O synthase</fullName>
    </alternativeName>
</protein>